<dbReference type="EMBL" id="CP000611">
    <property type="protein sequence ID" value="ABQ75287.1"/>
    <property type="molecule type" value="Genomic_DNA"/>
</dbReference>
<dbReference type="RefSeq" id="WP_003418367.1">
    <property type="nucleotide sequence ID" value="NZ_CP016972.1"/>
</dbReference>
<dbReference type="PDB" id="7F0D">
    <property type="method" value="EM"/>
    <property type="resolution" value="3.30 A"/>
    <property type="chains" value="4=2-37"/>
</dbReference>
<dbReference type="PDBsum" id="7F0D"/>
<dbReference type="SMR" id="A5U8D7"/>
<dbReference type="GeneID" id="45427450"/>
<dbReference type="KEGG" id="mra:MRA_3502"/>
<dbReference type="eggNOG" id="COG0257">
    <property type="taxonomic scope" value="Bacteria"/>
</dbReference>
<dbReference type="HOGENOM" id="CLU_135723_6_2_11"/>
<dbReference type="Proteomes" id="UP000001988">
    <property type="component" value="Chromosome"/>
</dbReference>
<dbReference type="GO" id="GO:0005737">
    <property type="term" value="C:cytoplasm"/>
    <property type="evidence" value="ECO:0007669"/>
    <property type="project" value="UniProtKB-ARBA"/>
</dbReference>
<dbReference type="GO" id="GO:1990904">
    <property type="term" value="C:ribonucleoprotein complex"/>
    <property type="evidence" value="ECO:0007669"/>
    <property type="project" value="UniProtKB-KW"/>
</dbReference>
<dbReference type="GO" id="GO:0005840">
    <property type="term" value="C:ribosome"/>
    <property type="evidence" value="ECO:0007669"/>
    <property type="project" value="UniProtKB-KW"/>
</dbReference>
<dbReference type="GO" id="GO:0003735">
    <property type="term" value="F:structural constituent of ribosome"/>
    <property type="evidence" value="ECO:0007669"/>
    <property type="project" value="InterPro"/>
</dbReference>
<dbReference type="GO" id="GO:0006412">
    <property type="term" value="P:translation"/>
    <property type="evidence" value="ECO:0007669"/>
    <property type="project" value="UniProtKB-UniRule"/>
</dbReference>
<dbReference type="HAMAP" id="MF_00251">
    <property type="entry name" value="Ribosomal_bL36"/>
    <property type="match status" value="1"/>
</dbReference>
<dbReference type="InterPro" id="IPR000473">
    <property type="entry name" value="Ribosomal_bL36"/>
</dbReference>
<dbReference type="InterPro" id="IPR035977">
    <property type="entry name" value="Ribosomal_bL36_sp"/>
</dbReference>
<dbReference type="NCBIfam" id="TIGR01022">
    <property type="entry name" value="rpmJ_bact"/>
    <property type="match status" value="1"/>
</dbReference>
<dbReference type="PANTHER" id="PTHR42888">
    <property type="entry name" value="50S RIBOSOMAL PROTEIN L36, CHLOROPLASTIC"/>
    <property type="match status" value="1"/>
</dbReference>
<dbReference type="PANTHER" id="PTHR42888:SF1">
    <property type="entry name" value="LARGE RIBOSOMAL SUBUNIT PROTEIN BL36C"/>
    <property type="match status" value="1"/>
</dbReference>
<dbReference type="Pfam" id="PF00444">
    <property type="entry name" value="Ribosomal_L36"/>
    <property type="match status" value="1"/>
</dbReference>
<dbReference type="SUPFAM" id="SSF57840">
    <property type="entry name" value="Ribosomal protein L36"/>
    <property type="match status" value="1"/>
</dbReference>
<dbReference type="PROSITE" id="PS00828">
    <property type="entry name" value="RIBOSOMAL_L36"/>
    <property type="match status" value="1"/>
</dbReference>
<organism>
    <name type="scientific">Mycobacterium tuberculosis (strain ATCC 25177 / H37Ra)</name>
    <dbReference type="NCBI Taxonomy" id="419947"/>
    <lineage>
        <taxon>Bacteria</taxon>
        <taxon>Bacillati</taxon>
        <taxon>Actinomycetota</taxon>
        <taxon>Actinomycetes</taxon>
        <taxon>Mycobacteriales</taxon>
        <taxon>Mycobacteriaceae</taxon>
        <taxon>Mycobacterium</taxon>
        <taxon>Mycobacterium tuberculosis complex</taxon>
    </lineage>
</organism>
<comment type="similarity">
    <text evidence="1">Belongs to the bacterial ribosomal protein bL36 family.</text>
</comment>
<protein>
    <recommendedName>
        <fullName evidence="1">Large ribosomal subunit protein bL36</fullName>
    </recommendedName>
    <alternativeName>
        <fullName evidence="2">50S ribosomal protein L36</fullName>
    </alternativeName>
</protein>
<feature type="chain" id="PRO_0000302247" description="Large ribosomal subunit protein bL36">
    <location>
        <begin position="1"/>
        <end position="37"/>
    </location>
</feature>
<feature type="strand" evidence="3">
    <location>
        <begin position="22"/>
        <end position="24"/>
    </location>
</feature>
<gene>
    <name evidence="1" type="primary">rpmJ</name>
    <name type="ordered locus">MRA_3502</name>
</gene>
<name>RL36_MYCTA</name>
<keyword id="KW-0002">3D-structure</keyword>
<keyword id="KW-1185">Reference proteome</keyword>
<keyword id="KW-0687">Ribonucleoprotein</keyword>
<keyword id="KW-0689">Ribosomal protein</keyword>
<accession>A5U8D7</accession>
<sequence>MKVNPSVKPICDKCRLIRRHGRVMVICSDPRHKQRQG</sequence>
<reference key="1">
    <citation type="journal article" date="2008" name="PLoS ONE">
        <title>Genetic basis of virulence attenuation revealed by comparative genomic analysis of Mycobacterium tuberculosis strain H37Ra versus H37Rv.</title>
        <authorList>
            <person name="Zheng H."/>
            <person name="Lu L."/>
            <person name="Wang B."/>
            <person name="Pu S."/>
            <person name="Zhang X."/>
            <person name="Zhu G."/>
            <person name="Shi W."/>
            <person name="Zhang L."/>
            <person name="Wang H."/>
            <person name="Wang S."/>
            <person name="Zhao G."/>
            <person name="Zhang Y."/>
        </authorList>
    </citation>
    <scope>NUCLEOTIDE SEQUENCE [LARGE SCALE GENOMIC DNA]</scope>
    <source>
        <strain>ATCC 25177 / H37Ra</strain>
    </source>
</reference>
<evidence type="ECO:0000255" key="1">
    <source>
        <dbReference type="HAMAP-Rule" id="MF_00251"/>
    </source>
</evidence>
<evidence type="ECO:0000305" key="2"/>
<evidence type="ECO:0007829" key="3">
    <source>
        <dbReference type="PDB" id="7F0D"/>
    </source>
</evidence>
<proteinExistence type="evidence at protein level"/>